<proteinExistence type="evidence at protein level"/>
<evidence type="ECO:0000305" key="1"/>
<evidence type="ECO:0007829" key="2">
    <source>
        <dbReference type="PDB" id="1AIS"/>
    </source>
</evidence>
<evidence type="ECO:0007829" key="3">
    <source>
        <dbReference type="PDB" id="1D3U"/>
    </source>
</evidence>
<evidence type="ECO:0007829" key="4">
    <source>
        <dbReference type="PDB" id="1PCZ"/>
    </source>
</evidence>
<keyword id="KW-0002">3D-structure</keyword>
<keyword id="KW-0238">DNA-binding</keyword>
<keyword id="KW-0677">Repeat</keyword>
<keyword id="KW-0804">Transcription</keyword>
<keyword id="KW-0805">Transcription regulation</keyword>
<sequence>MVDMSKVKLRIENIVASVDLFAQLDLEKVLDLCPNSKYNPEEFPGIICHLDDPKVALLIFSSGKLVVTGAKSVQDIERAVAKLAQKLKSIGVKFKRAPQIDVQNMVFSGDIGREFNLDVVALTLPNCEYEPEQFPGVIYRVKEPKSVILLFSSGKIVCSGAKSEADAWEAVRKLLRELDKYGLLEEEEEEL</sequence>
<accession>P62001</accession>
<accession>Q57050</accession>
<feature type="chain" id="PRO_0000154023" description="TATA-box-binding protein">
    <location>
        <begin position="1"/>
        <end position="191"/>
    </location>
</feature>
<feature type="repeat" description="1">
    <location>
        <begin position="11"/>
        <end position="87"/>
    </location>
</feature>
<feature type="repeat" description="2">
    <location>
        <begin position="102"/>
        <end position="178"/>
    </location>
</feature>
<feature type="helix" evidence="4">
    <location>
        <begin position="4"/>
        <end position="6"/>
    </location>
</feature>
<feature type="strand" evidence="2">
    <location>
        <begin position="8"/>
        <end position="19"/>
    </location>
</feature>
<feature type="helix" evidence="2">
    <location>
        <begin position="26"/>
        <end position="29"/>
    </location>
</feature>
<feature type="turn" evidence="2">
    <location>
        <begin position="30"/>
        <end position="32"/>
    </location>
</feature>
<feature type="strand" evidence="3">
    <location>
        <begin position="34"/>
        <end position="39"/>
    </location>
</feature>
<feature type="turn" evidence="2">
    <location>
        <begin position="40"/>
        <end position="42"/>
    </location>
</feature>
<feature type="strand" evidence="2">
    <location>
        <begin position="44"/>
        <end position="49"/>
    </location>
</feature>
<feature type="strand" evidence="2">
    <location>
        <begin position="51"/>
        <end position="53"/>
    </location>
</feature>
<feature type="strand" evidence="2">
    <location>
        <begin position="56"/>
        <end position="59"/>
    </location>
</feature>
<feature type="strand" evidence="2">
    <location>
        <begin position="63"/>
        <end position="72"/>
    </location>
</feature>
<feature type="helix" evidence="2">
    <location>
        <begin position="73"/>
        <end position="89"/>
    </location>
</feature>
<feature type="strand" evidence="2">
    <location>
        <begin position="95"/>
        <end position="97"/>
    </location>
</feature>
<feature type="strand" evidence="2">
    <location>
        <begin position="99"/>
        <end position="110"/>
    </location>
</feature>
<feature type="helix" evidence="2">
    <location>
        <begin position="117"/>
        <end position="123"/>
    </location>
</feature>
<feature type="strand" evidence="4">
    <location>
        <begin position="127"/>
        <end position="130"/>
    </location>
</feature>
<feature type="turn" evidence="2">
    <location>
        <begin position="131"/>
        <end position="133"/>
    </location>
</feature>
<feature type="strand" evidence="2">
    <location>
        <begin position="135"/>
        <end position="141"/>
    </location>
</feature>
<feature type="turn" evidence="2">
    <location>
        <begin position="142"/>
        <end position="145"/>
    </location>
</feature>
<feature type="strand" evidence="2">
    <location>
        <begin position="146"/>
        <end position="150"/>
    </location>
</feature>
<feature type="strand" evidence="2">
    <location>
        <begin position="154"/>
        <end position="163"/>
    </location>
</feature>
<feature type="helix" evidence="2">
    <location>
        <begin position="164"/>
        <end position="178"/>
    </location>
</feature>
<organism>
    <name type="scientific">Pyrococcus woesei</name>
    <dbReference type="NCBI Taxonomy" id="2262"/>
    <lineage>
        <taxon>Archaea</taxon>
        <taxon>Methanobacteriati</taxon>
        <taxon>Methanobacteriota</taxon>
        <taxon>Thermococci</taxon>
        <taxon>Thermococcales</taxon>
        <taxon>Thermococcaceae</taxon>
        <taxon>Pyrococcus</taxon>
    </lineage>
</organism>
<gene>
    <name type="primary">tbp</name>
</gene>
<dbReference type="EMBL" id="U10285">
    <property type="protein sequence ID" value="AAA73447.1"/>
    <property type="molecule type" value="Unassigned_DNA"/>
</dbReference>
<dbReference type="PIR" id="A54275">
    <property type="entry name" value="A54275"/>
</dbReference>
<dbReference type="PDB" id="1AIS">
    <property type="method" value="X-ray"/>
    <property type="resolution" value="2.10 A"/>
    <property type="chains" value="A=1-181"/>
</dbReference>
<dbReference type="PDB" id="1D3U">
    <property type="method" value="X-ray"/>
    <property type="resolution" value="2.40 A"/>
    <property type="chains" value="A=1-181"/>
</dbReference>
<dbReference type="PDB" id="1PCZ">
    <property type="method" value="X-ray"/>
    <property type="resolution" value="2.20 A"/>
    <property type="chains" value="A/B=1-191"/>
</dbReference>
<dbReference type="PDBsum" id="1AIS"/>
<dbReference type="PDBsum" id="1D3U"/>
<dbReference type="PDBsum" id="1PCZ"/>
<dbReference type="SMR" id="P62001"/>
<dbReference type="EvolutionaryTrace" id="P62001"/>
<dbReference type="GO" id="GO:0003677">
    <property type="term" value="F:DNA binding"/>
    <property type="evidence" value="ECO:0007669"/>
    <property type="project" value="UniProtKB-KW"/>
</dbReference>
<dbReference type="GO" id="GO:0003700">
    <property type="term" value="F:DNA-binding transcription factor activity"/>
    <property type="evidence" value="ECO:0007669"/>
    <property type="project" value="UniProtKB-UniRule"/>
</dbReference>
<dbReference type="GO" id="GO:0006352">
    <property type="term" value="P:DNA-templated transcription initiation"/>
    <property type="evidence" value="ECO:0007669"/>
    <property type="project" value="InterPro"/>
</dbReference>
<dbReference type="CDD" id="cd04518">
    <property type="entry name" value="TBP_archaea"/>
    <property type="match status" value="1"/>
</dbReference>
<dbReference type="FunFam" id="3.30.310.10:FF:000007">
    <property type="entry name" value="TATA-box-binding protein"/>
    <property type="match status" value="1"/>
</dbReference>
<dbReference type="FunFam" id="3.30.310.10:FF:000010">
    <property type="entry name" value="TATA-box-binding protein"/>
    <property type="match status" value="1"/>
</dbReference>
<dbReference type="Gene3D" id="3.30.310.10">
    <property type="entry name" value="TATA-Binding Protein"/>
    <property type="match status" value="2"/>
</dbReference>
<dbReference type="HAMAP" id="MF_00408">
    <property type="entry name" value="TATA_bind_prot_arch"/>
    <property type="match status" value="1"/>
</dbReference>
<dbReference type="InterPro" id="IPR000814">
    <property type="entry name" value="TBP"/>
</dbReference>
<dbReference type="InterPro" id="IPR033711">
    <property type="entry name" value="TBP_archaea"/>
</dbReference>
<dbReference type="InterPro" id="IPR030491">
    <property type="entry name" value="TBP_CS"/>
</dbReference>
<dbReference type="InterPro" id="IPR012295">
    <property type="entry name" value="TBP_dom_sf"/>
</dbReference>
<dbReference type="NCBIfam" id="NF001593">
    <property type="entry name" value="PRK00394.1-2"/>
    <property type="match status" value="1"/>
</dbReference>
<dbReference type="NCBIfam" id="NF001594">
    <property type="entry name" value="PRK00394.1-3"/>
    <property type="match status" value="1"/>
</dbReference>
<dbReference type="PANTHER" id="PTHR10126">
    <property type="entry name" value="TATA-BOX BINDING PROTEIN"/>
    <property type="match status" value="1"/>
</dbReference>
<dbReference type="Pfam" id="PF00352">
    <property type="entry name" value="TBP"/>
    <property type="match status" value="2"/>
</dbReference>
<dbReference type="PRINTS" id="PR00686">
    <property type="entry name" value="TIFACTORIID"/>
</dbReference>
<dbReference type="SUPFAM" id="SSF55945">
    <property type="entry name" value="TATA-box binding protein-like"/>
    <property type="match status" value="2"/>
</dbReference>
<dbReference type="PROSITE" id="PS00351">
    <property type="entry name" value="TFIID"/>
    <property type="match status" value="2"/>
</dbReference>
<comment type="function">
    <text>General factor that plays a role in the activation of archaeal genes transcribed by RNA polymerase. Binds specifically to the TATA box promoter element which lies close to the position of transcription initiation.</text>
</comment>
<comment type="similarity">
    <text evidence="1">Belongs to the TBP family.</text>
</comment>
<protein>
    <recommendedName>
        <fullName>TATA-box-binding protein</fullName>
    </recommendedName>
    <alternativeName>
        <fullName>Box A-binding protein</fullName>
        <shortName>BAP</shortName>
    </alternativeName>
    <alternativeName>
        <fullName>TATA sequence-binding protein</fullName>
        <shortName>TBP</shortName>
    </alternativeName>
    <alternativeName>
        <fullName>TATA-box factor</fullName>
    </alternativeName>
</protein>
<name>TBP_PYRWO</name>
<reference key="1">
    <citation type="journal article" date="1994" name="Science">
        <title>The TATA-binding protein: a general transcription factor in eukaryotes and archaebacteria.</title>
        <authorList>
            <person name="Rowlands T.M."/>
            <person name="Baumann P."/>
            <person name="Jackson S.P."/>
        </authorList>
    </citation>
    <scope>NUCLEOTIDE SEQUENCE [GENOMIC DNA]</scope>
</reference>
<reference key="2">
    <citation type="journal article" date="1996" name="J. Mol. Biol.">
        <title>The crystal structure of a hyperthermophilic archaeal TATA-box binding protein.</title>
        <authorList>
            <person name="DeDecker B.S."/>
            <person name="O'Brien R."/>
            <person name="Fleming P.J."/>
            <person name="Geiger J.H."/>
            <person name="Jackson S.P."/>
            <person name="Sigler P.B."/>
        </authorList>
    </citation>
    <scope>X-RAY CRYSTALLOGRAPHY (2.2 ANGSTROMS)</scope>
</reference>